<dbReference type="EMBL" id="AF428101">
    <property type="protein sequence ID" value="AAL26561.1"/>
    <property type="molecule type" value="mRNA"/>
</dbReference>
<dbReference type="EMBL" id="AK055953">
    <property type="protein sequence ID" value="BAB71054.1"/>
    <property type="molecule type" value="mRNA"/>
</dbReference>
<dbReference type="EMBL" id="AK091842">
    <property type="protein sequence ID" value="BAC03761.1"/>
    <property type="molecule type" value="mRNA"/>
</dbReference>
<dbReference type="EMBL" id="AK298787">
    <property type="protein sequence ID" value="BAG60925.1"/>
    <property type="molecule type" value="mRNA"/>
</dbReference>
<dbReference type="EMBL" id="AL390058">
    <property type="status" value="NOT_ANNOTATED_CDS"/>
    <property type="molecule type" value="Genomic_DNA"/>
</dbReference>
<dbReference type="EMBL" id="AL023095">
    <property type="status" value="NOT_ANNOTATED_CDS"/>
    <property type="molecule type" value="Genomic_DNA"/>
</dbReference>
<dbReference type="EMBL" id="AL109752">
    <property type="status" value="NOT_ANNOTATED_CDS"/>
    <property type="molecule type" value="Genomic_DNA"/>
</dbReference>
<dbReference type="EMBL" id="AL034406">
    <property type="status" value="NOT_ANNOTATED_CDS"/>
    <property type="molecule type" value="Genomic_DNA"/>
</dbReference>
<dbReference type="EMBL" id="AL138747">
    <property type="status" value="NOT_ANNOTATED_CDS"/>
    <property type="molecule type" value="Genomic_DNA"/>
</dbReference>
<dbReference type="EMBL" id="AL157381">
    <property type="status" value="NOT_ANNOTATED_CDS"/>
    <property type="molecule type" value="Genomic_DNA"/>
</dbReference>
<dbReference type="EMBL" id="AL591465">
    <property type="status" value="NOT_ANNOTATED_CDS"/>
    <property type="molecule type" value="Genomic_DNA"/>
</dbReference>
<dbReference type="EMBL" id="Z95124">
    <property type="status" value="NOT_ANNOTATED_CDS"/>
    <property type="molecule type" value="Genomic_DNA"/>
</dbReference>
<dbReference type="EMBL" id="Z95325">
    <property type="status" value="NOT_ANNOTATED_CDS"/>
    <property type="molecule type" value="Genomic_DNA"/>
</dbReference>
<dbReference type="EMBL" id="AL834456">
    <property type="protein sequence ID" value="CAD39116.1"/>
    <property type="molecule type" value="mRNA"/>
</dbReference>
<dbReference type="CCDS" id="CCDS14455.1">
    <molecule id="Q96NX9-1"/>
</dbReference>
<dbReference type="CCDS" id="CCDS48140.1">
    <molecule id="Q96NX9-2"/>
</dbReference>
<dbReference type="CCDS" id="CCDS55457.1">
    <molecule id="Q96NX9-4"/>
</dbReference>
<dbReference type="RefSeq" id="NP_001132986.1">
    <molecule id="Q96NX9-2"/>
    <property type="nucleotide sequence ID" value="NM_001139514.1"/>
</dbReference>
<dbReference type="RefSeq" id="NP_001132987.1">
    <molecule id="Q96NX9-4"/>
    <property type="nucleotide sequence ID" value="NM_001139515.1"/>
</dbReference>
<dbReference type="RefSeq" id="NP_444511.1">
    <molecule id="Q96NX9-1"/>
    <property type="nucleotide sequence ID" value="NM_053281.3"/>
</dbReference>
<dbReference type="RefSeq" id="XP_016884745.1">
    <property type="nucleotide sequence ID" value="XM_017029256.1"/>
</dbReference>
<dbReference type="SMR" id="Q96NX9"/>
<dbReference type="BioGRID" id="125560">
    <property type="interactions" value="13"/>
</dbReference>
<dbReference type="FunCoup" id="Q96NX9">
    <property type="interactions" value="51"/>
</dbReference>
<dbReference type="IntAct" id="Q96NX9">
    <property type="interactions" value="9"/>
</dbReference>
<dbReference type="MINT" id="Q96NX9"/>
<dbReference type="STRING" id="9606.ENSP00000362217"/>
<dbReference type="GlyGen" id="Q96NX9">
    <property type="glycosylation" value="1 site, 1 O-linked glycan (1 site)"/>
</dbReference>
<dbReference type="iPTMnet" id="Q96NX9"/>
<dbReference type="PhosphoSitePlus" id="Q96NX9"/>
<dbReference type="BioMuta" id="DACH2"/>
<dbReference type="DMDM" id="44887818"/>
<dbReference type="jPOST" id="Q96NX9"/>
<dbReference type="MassIVE" id="Q96NX9"/>
<dbReference type="PaxDb" id="9606-ENSP00000362217"/>
<dbReference type="PeptideAtlas" id="Q96NX9"/>
<dbReference type="ProteomicsDB" id="4870"/>
<dbReference type="ProteomicsDB" id="77573">
    <molecule id="Q96NX9-1"/>
</dbReference>
<dbReference type="ProteomicsDB" id="77574">
    <molecule id="Q96NX9-2"/>
</dbReference>
<dbReference type="ProteomicsDB" id="77575">
    <molecule id="Q96NX9-3"/>
</dbReference>
<dbReference type="Antibodypedia" id="417">
    <property type="antibodies" value="166 antibodies from 29 providers"/>
</dbReference>
<dbReference type="DNASU" id="117154"/>
<dbReference type="Ensembl" id="ENST00000373125.9">
    <molecule id="Q96NX9-1"/>
    <property type="protein sequence ID" value="ENSP00000362217.4"/>
    <property type="gene ID" value="ENSG00000126733.22"/>
</dbReference>
<dbReference type="Ensembl" id="ENST00000373131.5">
    <molecule id="Q96NX9-2"/>
    <property type="protein sequence ID" value="ENSP00000362223.1"/>
    <property type="gene ID" value="ENSG00000126733.22"/>
</dbReference>
<dbReference type="Ensembl" id="ENST00000508860.5">
    <molecule id="Q96NX9-4"/>
    <property type="protein sequence ID" value="ENSP00000420896.1"/>
    <property type="gene ID" value="ENSG00000126733.22"/>
</dbReference>
<dbReference type="Ensembl" id="ENST00000510272.5">
    <molecule id="Q96NX9-3"/>
    <property type="protein sequence ID" value="ENSP00000421919.1"/>
    <property type="gene ID" value="ENSG00000126733.22"/>
</dbReference>
<dbReference type="GeneID" id="117154"/>
<dbReference type="KEGG" id="hsa:117154"/>
<dbReference type="MANE-Select" id="ENST00000373125.9">
    <property type="protein sequence ID" value="ENSP00000362217.4"/>
    <property type="RefSeq nucleotide sequence ID" value="NM_053281.3"/>
    <property type="RefSeq protein sequence ID" value="NP_444511.1"/>
</dbReference>
<dbReference type="UCSC" id="uc004eew.3">
    <molecule id="Q96NX9-1"/>
    <property type="organism name" value="human"/>
</dbReference>
<dbReference type="AGR" id="HGNC:16814"/>
<dbReference type="CTD" id="117154"/>
<dbReference type="DisGeNET" id="117154"/>
<dbReference type="GeneCards" id="DACH2"/>
<dbReference type="HGNC" id="HGNC:16814">
    <property type="gene designation" value="DACH2"/>
</dbReference>
<dbReference type="HPA" id="ENSG00000126733">
    <property type="expression patterns" value="Group enriched (brain, epididymis, fallopian tube, retina)"/>
</dbReference>
<dbReference type="MIM" id="300608">
    <property type="type" value="gene"/>
</dbReference>
<dbReference type="neXtProt" id="NX_Q96NX9"/>
<dbReference type="OpenTargets" id="ENSG00000126733"/>
<dbReference type="PharmGKB" id="PA27135"/>
<dbReference type="VEuPathDB" id="HostDB:ENSG00000126733"/>
<dbReference type="eggNOG" id="KOG3915">
    <property type="taxonomic scope" value="Eukaryota"/>
</dbReference>
<dbReference type="GeneTree" id="ENSGT00390000001134"/>
<dbReference type="HOGENOM" id="CLU_027923_0_0_1"/>
<dbReference type="InParanoid" id="Q96NX9"/>
<dbReference type="OMA" id="PTPVGLY"/>
<dbReference type="OrthoDB" id="6436112at2759"/>
<dbReference type="PAN-GO" id="Q96NX9">
    <property type="GO annotations" value="5 GO annotations based on evolutionary models"/>
</dbReference>
<dbReference type="PhylomeDB" id="Q96NX9"/>
<dbReference type="TreeFam" id="TF316697"/>
<dbReference type="PathwayCommons" id="Q96NX9"/>
<dbReference type="SignaLink" id="Q96NX9"/>
<dbReference type="SIGNOR" id="Q96NX9"/>
<dbReference type="BioGRID-ORCS" id="117154">
    <property type="hits" value="18 hits in 776 CRISPR screens"/>
</dbReference>
<dbReference type="ChiTaRS" id="DACH2">
    <property type="organism name" value="human"/>
</dbReference>
<dbReference type="GeneWiki" id="DACH2"/>
<dbReference type="GenomeRNAi" id="117154"/>
<dbReference type="Pharos" id="Q96NX9">
    <property type="development level" value="Tbio"/>
</dbReference>
<dbReference type="PRO" id="PR:Q96NX9"/>
<dbReference type="Proteomes" id="UP000005640">
    <property type="component" value="Chromosome X"/>
</dbReference>
<dbReference type="RNAct" id="Q96NX9">
    <property type="molecule type" value="protein"/>
</dbReference>
<dbReference type="Bgee" id="ENSG00000126733">
    <property type="expression patterns" value="Expressed in endothelial cell and 93 other cell types or tissues"/>
</dbReference>
<dbReference type="ExpressionAtlas" id="Q96NX9">
    <property type="expression patterns" value="baseline and differential"/>
</dbReference>
<dbReference type="GO" id="GO:0005634">
    <property type="term" value="C:nucleus"/>
    <property type="evidence" value="ECO:0000318"/>
    <property type="project" value="GO_Central"/>
</dbReference>
<dbReference type="GO" id="GO:0005667">
    <property type="term" value="C:transcription regulator complex"/>
    <property type="evidence" value="ECO:0000318"/>
    <property type="project" value="GO_Central"/>
</dbReference>
<dbReference type="GO" id="GO:0000981">
    <property type="term" value="F:DNA-binding transcription factor activity, RNA polymerase II-specific"/>
    <property type="evidence" value="ECO:0000318"/>
    <property type="project" value="GO_Central"/>
</dbReference>
<dbReference type="GO" id="GO:0000978">
    <property type="term" value="F:RNA polymerase II cis-regulatory region sequence-specific DNA binding"/>
    <property type="evidence" value="ECO:0000318"/>
    <property type="project" value="GO_Central"/>
</dbReference>
<dbReference type="GO" id="GO:0046545">
    <property type="term" value="P:development of primary female sexual characteristics"/>
    <property type="evidence" value="ECO:0007669"/>
    <property type="project" value="Ensembl"/>
</dbReference>
<dbReference type="GO" id="GO:0006357">
    <property type="term" value="P:regulation of transcription by RNA polymerase II"/>
    <property type="evidence" value="ECO:0000318"/>
    <property type="project" value="GO_Central"/>
</dbReference>
<dbReference type="CDD" id="cd21081">
    <property type="entry name" value="DHD_Dac"/>
    <property type="match status" value="1"/>
</dbReference>
<dbReference type="FunFam" id="3.10.260.20:FF:000001">
    <property type="entry name" value="Dachshund homolog 1"/>
    <property type="match status" value="1"/>
</dbReference>
<dbReference type="Gene3D" id="3.10.260.20">
    <property type="entry name" value="Ski"/>
    <property type="match status" value="1"/>
</dbReference>
<dbReference type="InterPro" id="IPR052417">
    <property type="entry name" value="Dachshund_domain"/>
</dbReference>
<dbReference type="InterPro" id="IPR009061">
    <property type="entry name" value="DNA-bd_dom_put_sf"/>
</dbReference>
<dbReference type="InterPro" id="IPR003380">
    <property type="entry name" value="SKI/SNO/DAC"/>
</dbReference>
<dbReference type="InterPro" id="IPR037000">
    <property type="entry name" value="Ski_DNA-bd_sf"/>
</dbReference>
<dbReference type="PANTHER" id="PTHR12577">
    <property type="entry name" value="DACHSHUND"/>
    <property type="match status" value="1"/>
</dbReference>
<dbReference type="PANTHER" id="PTHR12577:SF7">
    <property type="entry name" value="DACHSHUND HOMOLOG 2"/>
    <property type="match status" value="1"/>
</dbReference>
<dbReference type="Pfam" id="PF02437">
    <property type="entry name" value="Ski_Sno_DHD"/>
    <property type="match status" value="1"/>
</dbReference>
<dbReference type="SUPFAM" id="SSF46955">
    <property type="entry name" value="Putative DNA-binding domain"/>
    <property type="match status" value="1"/>
</dbReference>
<sequence>MAVSASPVISATSSGAGVPGGLFRAEPLYSTPREPPRLTPNMINSFVVNNHSNSAGGGGRGNTNTNECRMVDMHGMKVASFLMDGQELICLPQVFDLFLKHLVGGLHTVYTKLKRLDISPVVCTVEQVRILRGLGAIQPGVNRCKLITRKDFETLFTDCTNARRKRQMTRKQAVNSSRPGRPPKRSLGVLQENARLLTHAVPGLLSPGLITPTGITAAAMAEAMKLQKMKLMAMNTLQGNGSQNGTESEPDDLNSNTGGSESSWDKDKMQSPFAAPGPQHGIAHAALAGQPGIGGAPTLNPLQQNHLLTNRLDLPFMMMPHPLLPVSLPPASVAMAMNQMNHLNTIANMAAAAQIHSPLSRAGTSVIKERIPESPSPAPSLEENHRPGSQTSSHTSSSVSSSPSQMDHHLERMEEVPVQIPIMKSPLDKIQLTPGQALPAGFPGPFIFADSLSSVETLLTNIQGLLKVALDNARIQEKQIQQEKKELRLELYREREIRENLERQLAVELQSRTTMQKRLKKEKKTKRKLQEALEFESKRREQVEQALKQATTSDSGLRMLKDTGIPDIEIENNGTPHDSAAMQGGNYYCLEMAQQLYSA</sequence>
<accession>Q96NX9</accession>
<accession>B1AJV3</accession>
<accession>B4DQG3</accession>
<accession>Q8NAY3</accession>
<accession>Q8ND17</accession>
<accession>Q96N55</accession>
<reference key="1">
    <citation type="submission" date="2001-10" db="EMBL/GenBank/DDBJ databases">
        <title>Human Dachshund 2.</title>
        <authorList>
            <person name="Prueitt R.L."/>
            <person name="Barnes R."/>
            <person name="Zinn A.R."/>
        </authorList>
    </citation>
    <scope>NUCLEOTIDE SEQUENCE [MRNA] (ISOFORM 1)</scope>
</reference>
<reference key="2">
    <citation type="journal article" date="2004" name="Nat. Genet.">
        <title>Complete sequencing and characterization of 21,243 full-length human cDNAs.</title>
        <authorList>
            <person name="Ota T."/>
            <person name="Suzuki Y."/>
            <person name="Nishikawa T."/>
            <person name="Otsuki T."/>
            <person name="Sugiyama T."/>
            <person name="Irie R."/>
            <person name="Wakamatsu A."/>
            <person name="Hayashi K."/>
            <person name="Sato H."/>
            <person name="Nagai K."/>
            <person name="Kimura K."/>
            <person name="Makita H."/>
            <person name="Sekine M."/>
            <person name="Obayashi M."/>
            <person name="Nishi T."/>
            <person name="Shibahara T."/>
            <person name="Tanaka T."/>
            <person name="Ishii S."/>
            <person name="Yamamoto J."/>
            <person name="Saito K."/>
            <person name="Kawai Y."/>
            <person name="Isono Y."/>
            <person name="Nakamura Y."/>
            <person name="Nagahari K."/>
            <person name="Murakami K."/>
            <person name="Yasuda T."/>
            <person name="Iwayanagi T."/>
            <person name="Wagatsuma M."/>
            <person name="Shiratori A."/>
            <person name="Sudo H."/>
            <person name="Hosoiri T."/>
            <person name="Kaku Y."/>
            <person name="Kodaira H."/>
            <person name="Kondo H."/>
            <person name="Sugawara M."/>
            <person name="Takahashi M."/>
            <person name="Kanda K."/>
            <person name="Yokoi T."/>
            <person name="Furuya T."/>
            <person name="Kikkawa E."/>
            <person name="Omura Y."/>
            <person name="Abe K."/>
            <person name="Kamihara K."/>
            <person name="Katsuta N."/>
            <person name="Sato K."/>
            <person name="Tanikawa M."/>
            <person name="Yamazaki M."/>
            <person name="Ninomiya K."/>
            <person name="Ishibashi T."/>
            <person name="Yamashita H."/>
            <person name="Murakawa K."/>
            <person name="Fujimori K."/>
            <person name="Tanai H."/>
            <person name="Kimata M."/>
            <person name="Watanabe M."/>
            <person name="Hiraoka S."/>
            <person name="Chiba Y."/>
            <person name="Ishida S."/>
            <person name="Ono Y."/>
            <person name="Takiguchi S."/>
            <person name="Watanabe S."/>
            <person name="Yosida M."/>
            <person name="Hotuta T."/>
            <person name="Kusano J."/>
            <person name="Kanehori K."/>
            <person name="Takahashi-Fujii A."/>
            <person name="Hara H."/>
            <person name="Tanase T.-O."/>
            <person name="Nomura Y."/>
            <person name="Togiya S."/>
            <person name="Komai F."/>
            <person name="Hara R."/>
            <person name="Takeuchi K."/>
            <person name="Arita M."/>
            <person name="Imose N."/>
            <person name="Musashino K."/>
            <person name="Yuuki H."/>
            <person name="Oshima A."/>
            <person name="Sasaki N."/>
            <person name="Aotsuka S."/>
            <person name="Yoshikawa Y."/>
            <person name="Matsunawa H."/>
            <person name="Ichihara T."/>
            <person name="Shiohata N."/>
            <person name="Sano S."/>
            <person name="Moriya S."/>
            <person name="Momiyama H."/>
            <person name="Satoh N."/>
            <person name="Takami S."/>
            <person name="Terashima Y."/>
            <person name="Suzuki O."/>
            <person name="Nakagawa S."/>
            <person name="Senoh A."/>
            <person name="Mizoguchi H."/>
            <person name="Goto Y."/>
            <person name="Shimizu F."/>
            <person name="Wakebe H."/>
            <person name="Hishigaki H."/>
            <person name="Watanabe T."/>
            <person name="Sugiyama A."/>
            <person name="Takemoto M."/>
            <person name="Kawakami B."/>
            <person name="Yamazaki M."/>
            <person name="Watanabe K."/>
            <person name="Kumagai A."/>
            <person name="Itakura S."/>
            <person name="Fukuzumi Y."/>
            <person name="Fujimori Y."/>
            <person name="Komiyama M."/>
            <person name="Tashiro H."/>
            <person name="Tanigami A."/>
            <person name="Fujiwara T."/>
            <person name="Ono T."/>
            <person name="Yamada K."/>
            <person name="Fujii Y."/>
            <person name="Ozaki K."/>
            <person name="Hirao M."/>
            <person name="Ohmori Y."/>
            <person name="Kawabata A."/>
            <person name="Hikiji T."/>
            <person name="Kobatake N."/>
            <person name="Inagaki H."/>
            <person name="Ikema Y."/>
            <person name="Okamoto S."/>
            <person name="Okitani R."/>
            <person name="Kawakami T."/>
            <person name="Noguchi S."/>
            <person name="Itoh T."/>
            <person name="Shigeta K."/>
            <person name="Senba T."/>
            <person name="Matsumura K."/>
            <person name="Nakajima Y."/>
            <person name="Mizuno T."/>
            <person name="Morinaga M."/>
            <person name="Sasaki M."/>
            <person name="Togashi T."/>
            <person name="Oyama M."/>
            <person name="Hata H."/>
            <person name="Watanabe M."/>
            <person name="Komatsu T."/>
            <person name="Mizushima-Sugano J."/>
            <person name="Satoh T."/>
            <person name="Shirai Y."/>
            <person name="Takahashi Y."/>
            <person name="Nakagawa K."/>
            <person name="Okumura K."/>
            <person name="Nagase T."/>
            <person name="Nomura N."/>
            <person name="Kikuchi H."/>
            <person name="Masuho Y."/>
            <person name="Yamashita R."/>
            <person name="Nakai K."/>
            <person name="Yada T."/>
            <person name="Nakamura Y."/>
            <person name="Ohara O."/>
            <person name="Isogai T."/>
            <person name="Sugano S."/>
        </authorList>
    </citation>
    <scope>NUCLEOTIDE SEQUENCE [LARGE SCALE MRNA] (ISOFORMS 2; 3 AND 4)</scope>
    <source>
        <tissue>Lung</tissue>
        <tissue>Neuron</tissue>
    </source>
</reference>
<reference key="3">
    <citation type="journal article" date="2005" name="Nature">
        <title>The DNA sequence of the human X chromosome.</title>
        <authorList>
            <person name="Ross M.T."/>
            <person name="Grafham D.V."/>
            <person name="Coffey A.J."/>
            <person name="Scherer S."/>
            <person name="McLay K."/>
            <person name="Muzny D."/>
            <person name="Platzer M."/>
            <person name="Howell G.R."/>
            <person name="Burrows C."/>
            <person name="Bird C.P."/>
            <person name="Frankish A."/>
            <person name="Lovell F.L."/>
            <person name="Howe K.L."/>
            <person name="Ashurst J.L."/>
            <person name="Fulton R.S."/>
            <person name="Sudbrak R."/>
            <person name="Wen G."/>
            <person name="Jones M.C."/>
            <person name="Hurles M.E."/>
            <person name="Andrews T.D."/>
            <person name="Scott C.E."/>
            <person name="Searle S."/>
            <person name="Ramser J."/>
            <person name="Whittaker A."/>
            <person name="Deadman R."/>
            <person name="Carter N.P."/>
            <person name="Hunt S.E."/>
            <person name="Chen R."/>
            <person name="Cree A."/>
            <person name="Gunaratne P."/>
            <person name="Havlak P."/>
            <person name="Hodgson A."/>
            <person name="Metzker M.L."/>
            <person name="Richards S."/>
            <person name="Scott G."/>
            <person name="Steffen D."/>
            <person name="Sodergren E."/>
            <person name="Wheeler D.A."/>
            <person name="Worley K.C."/>
            <person name="Ainscough R."/>
            <person name="Ambrose K.D."/>
            <person name="Ansari-Lari M.A."/>
            <person name="Aradhya S."/>
            <person name="Ashwell R.I."/>
            <person name="Babbage A.K."/>
            <person name="Bagguley C.L."/>
            <person name="Ballabio A."/>
            <person name="Banerjee R."/>
            <person name="Barker G.E."/>
            <person name="Barlow K.F."/>
            <person name="Barrett I.P."/>
            <person name="Bates K.N."/>
            <person name="Beare D.M."/>
            <person name="Beasley H."/>
            <person name="Beasley O."/>
            <person name="Beck A."/>
            <person name="Bethel G."/>
            <person name="Blechschmidt K."/>
            <person name="Brady N."/>
            <person name="Bray-Allen S."/>
            <person name="Bridgeman A.M."/>
            <person name="Brown A.J."/>
            <person name="Brown M.J."/>
            <person name="Bonnin D."/>
            <person name="Bruford E.A."/>
            <person name="Buhay C."/>
            <person name="Burch P."/>
            <person name="Burford D."/>
            <person name="Burgess J."/>
            <person name="Burrill W."/>
            <person name="Burton J."/>
            <person name="Bye J.M."/>
            <person name="Carder C."/>
            <person name="Carrel L."/>
            <person name="Chako J."/>
            <person name="Chapman J.C."/>
            <person name="Chavez D."/>
            <person name="Chen E."/>
            <person name="Chen G."/>
            <person name="Chen Y."/>
            <person name="Chen Z."/>
            <person name="Chinault C."/>
            <person name="Ciccodicola A."/>
            <person name="Clark S.Y."/>
            <person name="Clarke G."/>
            <person name="Clee C.M."/>
            <person name="Clegg S."/>
            <person name="Clerc-Blankenburg K."/>
            <person name="Clifford K."/>
            <person name="Cobley V."/>
            <person name="Cole C.G."/>
            <person name="Conquer J.S."/>
            <person name="Corby N."/>
            <person name="Connor R.E."/>
            <person name="David R."/>
            <person name="Davies J."/>
            <person name="Davis C."/>
            <person name="Davis J."/>
            <person name="Delgado O."/>
            <person name="Deshazo D."/>
            <person name="Dhami P."/>
            <person name="Ding Y."/>
            <person name="Dinh H."/>
            <person name="Dodsworth S."/>
            <person name="Draper H."/>
            <person name="Dugan-Rocha S."/>
            <person name="Dunham A."/>
            <person name="Dunn M."/>
            <person name="Durbin K.J."/>
            <person name="Dutta I."/>
            <person name="Eades T."/>
            <person name="Ellwood M."/>
            <person name="Emery-Cohen A."/>
            <person name="Errington H."/>
            <person name="Evans K.L."/>
            <person name="Faulkner L."/>
            <person name="Francis F."/>
            <person name="Frankland J."/>
            <person name="Fraser A.E."/>
            <person name="Galgoczy P."/>
            <person name="Gilbert J."/>
            <person name="Gill R."/>
            <person name="Gloeckner G."/>
            <person name="Gregory S.G."/>
            <person name="Gribble S."/>
            <person name="Griffiths C."/>
            <person name="Grocock R."/>
            <person name="Gu Y."/>
            <person name="Gwilliam R."/>
            <person name="Hamilton C."/>
            <person name="Hart E.A."/>
            <person name="Hawes A."/>
            <person name="Heath P.D."/>
            <person name="Heitmann K."/>
            <person name="Hennig S."/>
            <person name="Hernandez J."/>
            <person name="Hinzmann B."/>
            <person name="Ho S."/>
            <person name="Hoffs M."/>
            <person name="Howden P.J."/>
            <person name="Huckle E.J."/>
            <person name="Hume J."/>
            <person name="Hunt P.J."/>
            <person name="Hunt A.R."/>
            <person name="Isherwood J."/>
            <person name="Jacob L."/>
            <person name="Johnson D."/>
            <person name="Jones S."/>
            <person name="de Jong P.J."/>
            <person name="Joseph S.S."/>
            <person name="Keenan S."/>
            <person name="Kelly S."/>
            <person name="Kershaw J.K."/>
            <person name="Khan Z."/>
            <person name="Kioschis P."/>
            <person name="Klages S."/>
            <person name="Knights A.J."/>
            <person name="Kosiura A."/>
            <person name="Kovar-Smith C."/>
            <person name="Laird G.K."/>
            <person name="Langford C."/>
            <person name="Lawlor S."/>
            <person name="Leversha M."/>
            <person name="Lewis L."/>
            <person name="Liu W."/>
            <person name="Lloyd C."/>
            <person name="Lloyd D.M."/>
            <person name="Loulseged H."/>
            <person name="Loveland J.E."/>
            <person name="Lovell J.D."/>
            <person name="Lozado R."/>
            <person name="Lu J."/>
            <person name="Lyne R."/>
            <person name="Ma J."/>
            <person name="Maheshwari M."/>
            <person name="Matthews L.H."/>
            <person name="McDowall J."/>
            <person name="McLaren S."/>
            <person name="McMurray A."/>
            <person name="Meidl P."/>
            <person name="Meitinger T."/>
            <person name="Milne S."/>
            <person name="Miner G."/>
            <person name="Mistry S.L."/>
            <person name="Morgan M."/>
            <person name="Morris S."/>
            <person name="Mueller I."/>
            <person name="Mullikin J.C."/>
            <person name="Nguyen N."/>
            <person name="Nordsiek G."/>
            <person name="Nyakatura G."/>
            <person name="O'dell C.N."/>
            <person name="Okwuonu G."/>
            <person name="Palmer S."/>
            <person name="Pandian R."/>
            <person name="Parker D."/>
            <person name="Parrish J."/>
            <person name="Pasternak S."/>
            <person name="Patel D."/>
            <person name="Pearce A.V."/>
            <person name="Pearson D.M."/>
            <person name="Pelan S.E."/>
            <person name="Perez L."/>
            <person name="Porter K.M."/>
            <person name="Ramsey Y."/>
            <person name="Reichwald K."/>
            <person name="Rhodes S."/>
            <person name="Ridler K.A."/>
            <person name="Schlessinger D."/>
            <person name="Schueler M.G."/>
            <person name="Sehra H.K."/>
            <person name="Shaw-Smith C."/>
            <person name="Shen H."/>
            <person name="Sheridan E.M."/>
            <person name="Shownkeen R."/>
            <person name="Skuce C.D."/>
            <person name="Smith M.L."/>
            <person name="Sotheran E.C."/>
            <person name="Steingruber H.E."/>
            <person name="Steward C.A."/>
            <person name="Storey R."/>
            <person name="Swann R.M."/>
            <person name="Swarbreck D."/>
            <person name="Tabor P.E."/>
            <person name="Taudien S."/>
            <person name="Taylor T."/>
            <person name="Teague B."/>
            <person name="Thomas K."/>
            <person name="Thorpe A."/>
            <person name="Timms K."/>
            <person name="Tracey A."/>
            <person name="Trevanion S."/>
            <person name="Tromans A.C."/>
            <person name="d'Urso M."/>
            <person name="Verduzco D."/>
            <person name="Villasana D."/>
            <person name="Waldron L."/>
            <person name="Wall M."/>
            <person name="Wang Q."/>
            <person name="Warren J."/>
            <person name="Warry G.L."/>
            <person name="Wei X."/>
            <person name="West A."/>
            <person name="Whitehead S.L."/>
            <person name="Whiteley M.N."/>
            <person name="Wilkinson J.E."/>
            <person name="Willey D.L."/>
            <person name="Williams G."/>
            <person name="Williams L."/>
            <person name="Williamson A."/>
            <person name="Williamson H."/>
            <person name="Wilming L."/>
            <person name="Woodmansey R.L."/>
            <person name="Wray P.W."/>
            <person name="Yen J."/>
            <person name="Zhang J."/>
            <person name="Zhou J."/>
            <person name="Zoghbi H."/>
            <person name="Zorilla S."/>
            <person name="Buck D."/>
            <person name="Reinhardt R."/>
            <person name="Poustka A."/>
            <person name="Rosenthal A."/>
            <person name="Lehrach H."/>
            <person name="Meindl A."/>
            <person name="Minx P.J."/>
            <person name="Hillier L.W."/>
            <person name="Willard H.F."/>
            <person name="Wilson R.K."/>
            <person name="Waterston R.H."/>
            <person name="Rice C.M."/>
            <person name="Vaudin M."/>
            <person name="Coulson A."/>
            <person name="Nelson D.L."/>
            <person name="Weinstock G."/>
            <person name="Sulston J.E."/>
            <person name="Durbin R.M."/>
            <person name="Hubbard T."/>
            <person name="Gibbs R.A."/>
            <person name="Beck S."/>
            <person name="Rogers J."/>
            <person name="Bentley D.R."/>
        </authorList>
    </citation>
    <scope>NUCLEOTIDE SEQUENCE [LARGE SCALE GENOMIC DNA]</scope>
</reference>
<reference key="4">
    <citation type="journal article" date="2007" name="BMC Genomics">
        <title>The full-ORF clone resource of the German cDNA consortium.</title>
        <authorList>
            <person name="Bechtel S."/>
            <person name="Rosenfelder H."/>
            <person name="Duda A."/>
            <person name="Schmidt C.P."/>
            <person name="Ernst U."/>
            <person name="Wellenreuther R."/>
            <person name="Mehrle A."/>
            <person name="Schuster C."/>
            <person name="Bahr A."/>
            <person name="Bloecker H."/>
            <person name="Heubner D."/>
            <person name="Hoerlein A."/>
            <person name="Michel G."/>
            <person name="Wedler H."/>
            <person name="Koehrer K."/>
            <person name="Ottenwaelder B."/>
            <person name="Poustka A."/>
            <person name="Wiemann S."/>
            <person name="Schupp I."/>
        </authorList>
    </citation>
    <scope>NUCLEOTIDE SEQUENCE [LARGE SCALE MRNA] OF 414-599 (ISOFORMS 1/3/4)</scope>
    <source>
        <tissue>Brain</tissue>
    </source>
</reference>
<keyword id="KW-0025">Alternative splicing</keyword>
<keyword id="KW-0175">Coiled coil</keyword>
<keyword id="KW-0217">Developmental protein</keyword>
<keyword id="KW-0238">DNA-binding</keyword>
<keyword id="KW-0539">Nucleus</keyword>
<keyword id="KW-1267">Proteomics identification</keyword>
<keyword id="KW-1185">Reference proteome</keyword>
<keyword id="KW-0678">Repressor</keyword>
<keyword id="KW-0804">Transcription</keyword>
<keyword id="KW-0805">Transcription regulation</keyword>
<proteinExistence type="evidence at protein level"/>
<comment type="function">
    <text evidence="1">Transcription factor that is involved in regulation of organogenesis. Seems to be a regulator for SIX1 and SIX6. Seems to act as a corepressor of SIX6 in regulating proliferation by directly repressing cyclin-dependent kinase inhibitors, including the p27Kip1 promoter. Is recruited with SIX6 to the p27Kip1 promoter in embryonal retina. SIX6 corepression also seems to involve NCOR1, TBL1, HDAC1 and HDAC3. May be involved together with PAX3, SIX1, and EYA2 in regulation of myogenesis. In the developing somite, expression of DACH2 and PAX3 is regulated by the overlying ectoderm, and DACH2 and PAX3 positively regulate each other's expression (By similarity). Probably binds to DNA via its DACHbox-N domain.</text>
</comment>
<comment type="subunit">
    <text evidence="1">Interacts with SIX6 and EYA2.</text>
</comment>
<comment type="subcellular location">
    <subcellularLocation>
        <location evidence="5">Nucleus</location>
    </subcellularLocation>
</comment>
<comment type="alternative products">
    <event type="alternative splicing"/>
    <isoform>
        <id>Q96NX9-1</id>
        <name>1</name>
        <sequence type="displayed"/>
    </isoform>
    <isoform>
        <id>Q96NX9-2</id>
        <name>2</name>
        <sequence type="described" ref="VSP_009490 VSP_009491"/>
    </isoform>
    <isoform>
        <id>Q96NX9-3</id>
        <name>3</name>
        <sequence type="described" ref="VSP_009492"/>
    </isoform>
    <isoform>
        <id>Q96NX9-4</id>
        <name>4</name>
        <sequence type="described" ref="VSP_044275"/>
    </isoform>
</comment>
<comment type="domain">
    <text evidence="1">The DACHbox-N/DD1 domain forms a structure containing a DNA binding motif similar to that of the forkhead/winged helix domain.</text>
</comment>
<comment type="similarity">
    <text evidence="5">Belongs to the DACH/dachshund family.</text>
</comment>
<protein>
    <recommendedName>
        <fullName>Dachshund homolog 2</fullName>
        <shortName>Dach2</shortName>
    </recommendedName>
</protein>
<feature type="chain" id="PRO_0000095599" description="Dachshund homolog 2">
    <location>
        <begin position="1"/>
        <end position="599"/>
    </location>
</feature>
<feature type="region of interest" description="DACHbox-N">
    <location>
        <begin position="69"/>
        <end position="155"/>
    </location>
</feature>
<feature type="region of interest" description="Disordered" evidence="3">
    <location>
        <begin position="166"/>
        <end position="186"/>
    </location>
</feature>
<feature type="region of interest" description="Disordered" evidence="3">
    <location>
        <begin position="237"/>
        <end position="280"/>
    </location>
</feature>
<feature type="region of interest" description="Disordered" evidence="3">
    <location>
        <begin position="370"/>
        <end position="409"/>
    </location>
</feature>
<feature type="region of interest" description="DACHbox-C">
    <location>
        <begin position="453"/>
        <end position="533"/>
    </location>
</feature>
<feature type="coiled-coil region" evidence="2">
    <location>
        <begin position="459"/>
        <end position="554"/>
    </location>
</feature>
<feature type="compositionally biased region" description="Polar residues" evidence="3">
    <location>
        <begin position="237"/>
        <end position="262"/>
    </location>
</feature>
<feature type="compositionally biased region" description="Low complexity" evidence="3">
    <location>
        <begin position="389"/>
        <end position="405"/>
    </location>
</feature>
<feature type="splice variant" id="VSP_009492" description="In isoform 3." evidence="4">
    <location>
        <begin position="1"/>
        <end position="219"/>
    </location>
</feature>
<feature type="splice variant" id="VSP_044275" description="In isoform 4." evidence="4">
    <location>
        <begin position="1"/>
        <end position="167"/>
    </location>
</feature>
<feature type="splice variant" id="VSP_009490" description="In isoform 2." evidence="4">
    <location>
        <begin position="163"/>
        <end position="175"/>
    </location>
</feature>
<feature type="splice variant" id="VSP_009491" description="In isoform 2." evidence="4">
    <original>GGNYYCLEMAQQLYSA</original>
    <variation>A</variation>
    <location>
        <begin position="584"/>
        <end position="599"/>
    </location>
</feature>
<organism>
    <name type="scientific">Homo sapiens</name>
    <name type="common">Human</name>
    <dbReference type="NCBI Taxonomy" id="9606"/>
    <lineage>
        <taxon>Eukaryota</taxon>
        <taxon>Metazoa</taxon>
        <taxon>Chordata</taxon>
        <taxon>Craniata</taxon>
        <taxon>Vertebrata</taxon>
        <taxon>Euteleostomi</taxon>
        <taxon>Mammalia</taxon>
        <taxon>Eutheria</taxon>
        <taxon>Euarchontoglires</taxon>
        <taxon>Primates</taxon>
        <taxon>Haplorrhini</taxon>
        <taxon>Catarrhini</taxon>
        <taxon>Hominidae</taxon>
        <taxon>Homo</taxon>
    </lineage>
</organism>
<evidence type="ECO:0000250" key="1"/>
<evidence type="ECO:0000255" key="2"/>
<evidence type="ECO:0000256" key="3">
    <source>
        <dbReference type="SAM" id="MobiDB-lite"/>
    </source>
</evidence>
<evidence type="ECO:0000303" key="4">
    <source>
    </source>
</evidence>
<evidence type="ECO:0000305" key="5"/>
<gene>
    <name type="primary">DACH2</name>
</gene>
<name>DACH2_HUMAN</name>